<name>ATPF_PROM9</name>
<gene>
    <name evidence="1" type="primary">atpF</name>
    <name type="ordered locus">PMT9312_1546</name>
</gene>
<accession>Q318T9</accession>
<organism>
    <name type="scientific">Prochlorococcus marinus (strain MIT 9312)</name>
    <dbReference type="NCBI Taxonomy" id="74546"/>
    <lineage>
        <taxon>Bacteria</taxon>
        <taxon>Bacillati</taxon>
        <taxon>Cyanobacteriota</taxon>
        <taxon>Cyanophyceae</taxon>
        <taxon>Synechococcales</taxon>
        <taxon>Prochlorococcaceae</taxon>
        <taxon>Prochlorococcus</taxon>
    </lineage>
</organism>
<keyword id="KW-0066">ATP synthesis</keyword>
<keyword id="KW-0138">CF(0)</keyword>
<keyword id="KW-0375">Hydrogen ion transport</keyword>
<keyword id="KW-0406">Ion transport</keyword>
<keyword id="KW-0472">Membrane</keyword>
<keyword id="KW-0793">Thylakoid</keyword>
<keyword id="KW-0812">Transmembrane</keyword>
<keyword id="KW-1133">Transmembrane helix</keyword>
<keyword id="KW-0813">Transport</keyword>
<reference key="1">
    <citation type="journal article" date="2006" name="Science">
        <title>Genomic islands and the ecology and evolution of Prochlorococcus.</title>
        <authorList>
            <person name="Coleman M.L."/>
            <person name="Sullivan M.B."/>
            <person name="Martiny A.C."/>
            <person name="Steglich C."/>
            <person name="Barry K."/>
            <person name="Delong E.F."/>
            <person name="Chisholm S.W."/>
        </authorList>
    </citation>
    <scope>NUCLEOTIDE SEQUENCE [LARGE SCALE GENOMIC DNA]</scope>
    <source>
        <strain>MIT 9312</strain>
    </source>
</reference>
<dbReference type="EMBL" id="CP000111">
    <property type="protein sequence ID" value="ABB50606.1"/>
    <property type="molecule type" value="Genomic_DNA"/>
</dbReference>
<dbReference type="RefSeq" id="WP_011377089.1">
    <property type="nucleotide sequence ID" value="NC_007577.1"/>
</dbReference>
<dbReference type="SMR" id="Q318T9"/>
<dbReference type="STRING" id="74546.PMT9312_1546"/>
<dbReference type="KEGG" id="pmi:PMT9312_1546"/>
<dbReference type="eggNOG" id="COG0711">
    <property type="taxonomic scope" value="Bacteria"/>
</dbReference>
<dbReference type="HOGENOM" id="CLU_079215_8_1_3"/>
<dbReference type="OrthoDB" id="461217at2"/>
<dbReference type="Proteomes" id="UP000002715">
    <property type="component" value="Chromosome"/>
</dbReference>
<dbReference type="GO" id="GO:0031676">
    <property type="term" value="C:plasma membrane-derived thylakoid membrane"/>
    <property type="evidence" value="ECO:0007669"/>
    <property type="project" value="UniProtKB-SubCell"/>
</dbReference>
<dbReference type="GO" id="GO:0045259">
    <property type="term" value="C:proton-transporting ATP synthase complex"/>
    <property type="evidence" value="ECO:0007669"/>
    <property type="project" value="UniProtKB-KW"/>
</dbReference>
<dbReference type="GO" id="GO:0046933">
    <property type="term" value="F:proton-transporting ATP synthase activity, rotational mechanism"/>
    <property type="evidence" value="ECO:0007669"/>
    <property type="project" value="UniProtKB-UniRule"/>
</dbReference>
<dbReference type="CDD" id="cd06503">
    <property type="entry name" value="ATP-synt_Fo_b"/>
    <property type="match status" value="1"/>
</dbReference>
<dbReference type="HAMAP" id="MF_01398">
    <property type="entry name" value="ATP_synth_b_bprime"/>
    <property type="match status" value="1"/>
</dbReference>
<dbReference type="InterPro" id="IPR028987">
    <property type="entry name" value="ATP_synth_B-like_membr_sf"/>
</dbReference>
<dbReference type="InterPro" id="IPR002146">
    <property type="entry name" value="ATP_synth_b/b'su_bac/chlpt"/>
</dbReference>
<dbReference type="NCBIfam" id="NF005606">
    <property type="entry name" value="PRK07352.1"/>
    <property type="match status" value="1"/>
</dbReference>
<dbReference type="PANTHER" id="PTHR34264">
    <property type="entry name" value="ATP SYNTHASE SUBUNIT B, CHLOROPLASTIC"/>
    <property type="match status" value="1"/>
</dbReference>
<dbReference type="PANTHER" id="PTHR34264:SF3">
    <property type="entry name" value="ATP SYNTHASE SUBUNIT B, CHLOROPLASTIC"/>
    <property type="match status" value="1"/>
</dbReference>
<dbReference type="Pfam" id="PF00430">
    <property type="entry name" value="ATP-synt_B"/>
    <property type="match status" value="1"/>
</dbReference>
<dbReference type="SUPFAM" id="SSF81573">
    <property type="entry name" value="F1F0 ATP synthase subunit B, membrane domain"/>
    <property type="match status" value="1"/>
</dbReference>
<proteinExistence type="inferred from homology"/>
<comment type="function">
    <text evidence="1">F(1)F(0) ATP synthase produces ATP from ADP in the presence of a proton or sodium gradient. F-type ATPases consist of two structural domains, F(1) containing the extramembraneous catalytic core and F(0) containing the membrane proton channel, linked together by a central stalk and a peripheral stalk. During catalysis, ATP synthesis in the catalytic domain of F(1) is coupled via a rotary mechanism of the central stalk subunits to proton translocation.</text>
</comment>
<comment type="function">
    <text evidence="1">Component of the F(0) channel, it forms part of the peripheral stalk, linking F(1) to F(0).</text>
</comment>
<comment type="subunit">
    <text evidence="1">F-type ATPases have 2 components, F(1) - the catalytic core - and F(0) - the membrane proton channel. F(1) has five subunits: alpha(3), beta(3), gamma(1), delta(1), epsilon(1). F(0) has four main subunits: a(1), b(1), b'(1) and c(10-14). The alpha and beta chains form an alternating ring which encloses part of the gamma chain. F(1) is attached to F(0) by a central stalk formed by the gamma and epsilon chains, while a peripheral stalk is formed by the delta, b and b' chains.</text>
</comment>
<comment type="subcellular location">
    <subcellularLocation>
        <location evidence="1">Cellular thylakoid membrane</location>
        <topology evidence="1">Single-pass membrane protein</topology>
    </subcellularLocation>
</comment>
<comment type="similarity">
    <text evidence="1">Belongs to the ATPase B chain family.</text>
</comment>
<protein>
    <recommendedName>
        <fullName evidence="1">ATP synthase subunit b</fullName>
    </recommendedName>
    <alternativeName>
        <fullName evidence="1">ATP synthase F(0) sector subunit b</fullName>
    </alternativeName>
    <alternativeName>
        <fullName evidence="1">ATPase subunit I</fullName>
    </alternativeName>
    <alternativeName>
        <fullName evidence="1">F-type ATPase subunit b</fullName>
        <shortName evidence="1">F-ATPase subunit b</shortName>
    </alternativeName>
</protein>
<sequence>MNLTLLATEGFGLNFNLFETNILNWAVVVFGLYKFLPSFLGKMLQKRREGILLELKDAEDRLVNATKALDKAKKDLSSAEEKASQIKADSFKRSESIRMESEKKAIEEMARIKQSAISDESSEASRAISQLRKEAVELAIKKALDSLPNRLDSTTQENLVTQSINNIEVN</sequence>
<feature type="chain" id="PRO_0000368668" description="ATP synthase subunit b">
    <location>
        <begin position="1"/>
        <end position="170"/>
    </location>
</feature>
<feature type="transmembrane region" description="Helical" evidence="1">
    <location>
        <begin position="15"/>
        <end position="37"/>
    </location>
</feature>
<evidence type="ECO:0000255" key="1">
    <source>
        <dbReference type="HAMAP-Rule" id="MF_01398"/>
    </source>
</evidence>